<accession>A0A1Q5LQW7</accession>
<protein>
    <recommendedName>
        <fullName evidence="2">Gas vesicle protein S</fullName>
    </recommendedName>
</protein>
<comment type="function">
    <text evidence="3">Probably a minor component of the gas vesicle (Probable). Gas vesicles are hollow, gas filled proteinaceous nanostructures found in some microorganisms. It is not clear what function gas vesicles perform in soil bacteria (Probable).</text>
</comment>
<comment type="subcellular location">
    <subcellularLocation>
        <location evidence="4">Gas vesicle</location>
    </subcellularLocation>
</comment>
<comment type="induction">
    <text evidence="1">Gas vesicle production is induced by growth conditions that promote production of secondary metabolites tiancimycin A and B.</text>
</comment>
<comment type="miscellaneous">
    <text evidence="1">This strain probably produces some gas vesicles from the probable gvpO-gvpA-gvpF-gvpG-gvpJ-gvpL-gvpS-gvpK operon; it can be induced to produce more under certain growth conditions.</text>
</comment>
<comment type="similarity">
    <text evidence="3">Belongs to the gas vesicle GvpA family.</text>
</comment>
<organism>
    <name type="scientific">Streptomyces sp. (strain CB03234)</name>
    <dbReference type="NCBI Taxonomy" id="1703937"/>
    <lineage>
        <taxon>Bacteria</taxon>
        <taxon>Bacillati</taxon>
        <taxon>Actinomycetota</taxon>
        <taxon>Actinomycetes</taxon>
        <taxon>Kitasatosporales</taxon>
        <taxon>Streptomycetaceae</taxon>
        <taxon>Streptomyces</taxon>
    </lineage>
</organism>
<sequence length="75" mass="8039">MTAPVTRAAPEPLAERRIALVDLLDRLLAGGVVLTGDLTLSIADVDLVRVDLKALISSVGEDVPSPWEPLREVRP</sequence>
<name>GVPS_STRX0</name>
<reference evidence="5" key="1">
    <citation type="journal article" date="2016" name="MBio">
        <title>Strain Prioritization and Genome Mining for Enediyne Natural Products.</title>
        <authorList>
            <person name="Yan X."/>
            <person name="Ge H."/>
            <person name="Huang T."/>
            <person name="Hindra X."/>
            <person name="Yang D."/>
            <person name="Teng Q."/>
            <person name="Crnovcic I."/>
            <person name="Li X."/>
            <person name="Rudolf J.D."/>
            <person name="Lohman J.R."/>
            <person name="Gansemans Y."/>
            <person name="Zhu X."/>
            <person name="Huang Y."/>
            <person name="Zhao L.X."/>
            <person name="Jiang Y."/>
            <person name="Van Nieuwerburgh F."/>
            <person name="Rader C."/>
            <person name="Duan Y."/>
            <person name="Shen B."/>
        </authorList>
    </citation>
    <scope>NUCLEOTIDE SEQUENCE [LARGE SCALE GENOMIC DNA]</scope>
    <source>
        <strain>CB03234</strain>
    </source>
</reference>
<reference key="2">
    <citation type="journal article" date="2019" name="Appl. Microbiol. Biotechnol.">
        <title>Discovery of gas vesicles in Streptomyces sp. CB03234-S and potential effects of gas vesicle gene overexpression on morphological and metabolic changes in streptomycetes.</title>
        <authorList>
            <person name="Huang R."/>
            <person name="Lin J."/>
            <person name="Gao D."/>
            <person name="Zhang F."/>
            <person name="Yi L."/>
            <person name="Huang Y."/>
            <person name="Yan X."/>
            <person name="Duan Y."/>
            <person name="Zhu X."/>
        </authorList>
    </citation>
    <scope>INDUCTION</scope>
    <scope>PROBABLE GAS VESICLE FORMATION</scope>
    <source>
        <strain>CB03234</strain>
    </source>
</reference>
<dbReference type="EMBL" id="LIYH01000003">
    <property type="protein sequence ID" value="OKK04373.1"/>
    <property type="molecule type" value="Genomic_DNA"/>
</dbReference>
<dbReference type="RefSeq" id="WP_073754886.1">
    <property type="nucleotide sequence ID" value="NZ_LIYH01000003.1"/>
</dbReference>
<dbReference type="STRING" id="1703937.AMK26_13450"/>
<dbReference type="OrthoDB" id="3790311at2"/>
<dbReference type="Proteomes" id="UP000186270">
    <property type="component" value="Unassembled WGS sequence"/>
</dbReference>
<dbReference type="GO" id="GO:0031411">
    <property type="term" value="C:gas vesicle"/>
    <property type="evidence" value="ECO:0007669"/>
    <property type="project" value="UniProtKB-SubCell"/>
</dbReference>
<dbReference type="GO" id="GO:0012506">
    <property type="term" value="C:vesicle membrane"/>
    <property type="evidence" value="ECO:0007669"/>
    <property type="project" value="InterPro"/>
</dbReference>
<dbReference type="GO" id="GO:0005198">
    <property type="term" value="F:structural molecule activity"/>
    <property type="evidence" value="ECO:0007669"/>
    <property type="project" value="InterPro"/>
</dbReference>
<dbReference type="InterPro" id="IPR000638">
    <property type="entry name" value="Gas-vesicle_GvpA-like"/>
</dbReference>
<dbReference type="InterPro" id="IPR050530">
    <property type="entry name" value="GvpA"/>
</dbReference>
<dbReference type="PANTHER" id="PTHR35344:SF4">
    <property type="entry name" value="GAS VESICLE PROTEIN A1"/>
    <property type="match status" value="1"/>
</dbReference>
<dbReference type="PANTHER" id="PTHR35344">
    <property type="entry name" value="GAS VESICLE STRUCTURAL PROTEIN 2-RELATED"/>
    <property type="match status" value="1"/>
</dbReference>
<dbReference type="Pfam" id="PF00741">
    <property type="entry name" value="Gas_vesicle"/>
    <property type="match status" value="1"/>
</dbReference>
<keyword id="KW-0304">Gas vesicle</keyword>
<keyword id="KW-1185">Reference proteome</keyword>
<proteinExistence type="evidence at transcript level"/>
<feature type="chain" id="PRO_0000458452" description="Gas vesicle protein S">
    <location>
        <begin position="1"/>
        <end position="75"/>
    </location>
</feature>
<evidence type="ECO:0000269" key="1">
    <source>
    </source>
</evidence>
<evidence type="ECO:0000303" key="2">
    <source>
    </source>
</evidence>
<evidence type="ECO:0000305" key="3"/>
<evidence type="ECO:0000305" key="4">
    <source>
    </source>
</evidence>
<evidence type="ECO:0000312" key="5">
    <source>
        <dbReference type="EMBL" id="OKK04373.1"/>
    </source>
</evidence>
<gene>
    <name evidence="2" type="primary">gvpS</name>
    <name evidence="5" type="ORF">AMK26_13450</name>
</gene>